<proteinExistence type="inferred from homology"/>
<gene>
    <name evidence="1" type="primary">thiC</name>
    <name type="ordered locus">EcSMS35_4442</name>
</gene>
<sequence>MSATKLTRREQRAQAQHFIDTLEGTAFPNSKRIYITGTQPGVRVPMREIQLSPTLIGGSKEQPQYEENEAIPVYDASGPYGDPQIAINVQQGLAKLRQPWIDARGDTEELTVRSSDYTKARLADDGLDELRFSGVLTPKRAKAGRRVTQLHYARRGIITPEMEFIAIRENMGRERIRSEVLRHQHPGMSFGARLPENITAEFVRDEVAAGRAIIPANINHPESEPMIIGRNFLVKVNANIGNSAVTSSIEEEVEKLVWSTRWGADTVMDLSTGRYIHETREWILRNSPVPIGTVPIYQALEKVNGIAEDLTWEAFRDTLLEQAEQGVDYFTIHAGVLLRYVPMTAKRLTGIVSRGGSIMAKWCLSHHQENFLYQHFREICEICAAYDVSLSLGDGLRPGSVQDANDEAQFAELHTLGELTKIAWEYDVQVMIEGPGHVPMQMIRRNMTEELEQCHEAPFYTLGPLTTDIAPGYDHFTSGIGAAMIGWFGCAMLCYVTPKEHLGLPNKEDVKQGLITYKIAAHAADLAKGHPGAQIRDNAMSKARFEFRWEDQFNLALDPFTARAYHDETLPQESGKVAHFCSMCGPKFCSMKISQEVRDYAAAQTIEVGMADMSENFRARGGEIYLRKEEA</sequence>
<comment type="function">
    <text evidence="1">Catalyzes the synthesis of the hydroxymethylpyrimidine phosphate (HMP-P) moiety of thiamine from aminoimidazole ribotide (AIR) in a radical S-adenosyl-L-methionine (SAM)-dependent reaction.</text>
</comment>
<comment type="catalytic activity">
    <reaction evidence="1">
        <text>5-amino-1-(5-phospho-beta-D-ribosyl)imidazole + S-adenosyl-L-methionine = 4-amino-2-methyl-5-(phosphooxymethyl)pyrimidine + CO + 5'-deoxyadenosine + formate + L-methionine + 3 H(+)</text>
        <dbReference type="Rhea" id="RHEA:24840"/>
        <dbReference type="ChEBI" id="CHEBI:15378"/>
        <dbReference type="ChEBI" id="CHEBI:15740"/>
        <dbReference type="ChEBI" id="CHEBI:17245"/>
        <dbReference type="ChEBI" id="CHEBI:17319"/>
        <dbReference type="ChEBI" id="CHEBI:57844"/>
        <dbReference type="ChEBI" id="CHEBI:58354"/>
        <dbReference type="ChEBI" id="CHEBI:59789"/>
        <dbReference type="ChEBI" id="CHEBI:137981"/>
        <dbReference type="EC" id="4.1.99.17"/>
    </reaction>
</comment>
<comment type="cofactor">
    <cofactor evidence="1">
        <name>[4Fe-4S] cluster</name>
        <dbReference type="ChEBI" id="CHEBI:49883"/>
    </cofactor>
    <text evidence="1">Binds 1 [4Fe-4S] cluster per subunit. The cluster is coordinated with 3 cysteines and an exchangeable S-adenosyl-L-methionine.</text>
</comment>
<comment type="pathway">
    <text evidence="1">Cofactor biosynthesis; thiamine diphosphate biosynthesis.</text>
</comment>
<comment type="subunit">
    <text evidence="1">Homodimer.</text>
</comment>
<comment type="similarity">
    <text evidence="1">Belongs to the ThiC family.</text>
</comment>
<evidence type="ECO:0000255" key="1">
    <source>
        <dbReference type="HAMAP-Rule" id="MF_00089"/>
    </source>
</evidence>
<dbReference type="EC" id="4.1.99.17" evidence="1"/>
<dbReference type="EMBL" id="CP000970">
    <property type="protein sequence ID" value="ACB15934.1"/>
    <property type="molecule type" value="Genomic_DNA"/>
</dbReference>
<dbReference type="RefSeq" id="WP_001276904.1">
    <property type="nucleotide sequence ID" value="NC_010498.1"/>
</dbReference>
<dbReference type="SMR" id="B1LNU6"/>
<dbReference type="KEGG" id="ecm:EcSMS35_4442"/>
<dbReference type="HOGENOM" id="CLU_013181_2_1_6"/>
<dbReference type="UniPathway" id="UPA00060"/>
<dbReference type="Proteomes" id="UP000007011">
    <property type="component" value="Chromosome"/>
</dbReference>
<dbReference type="GO" id="GO:0005829">
    <property type="term" value="C:cytosol"/>
    <property type="evidence" value="ECO:0007669"/>
    <property type="project" value="TreeGrafter"/>
</dbReference>
<dbReference type="GO" id="GO:0051539">
    <property type="term" value="F:4 iron, 4 sulfur cluster binding"/>
    <property type="evidence" value="ECO:0007669"/>
    <property type="project" value="UniProtKB-KW"/>
</dbReference>
<dbReference type="GO" id="GO:0016830">
    <property type="term" value="F:carbon-carbon lyase activity"/>
    <property type="evidence" value="ECO:0007669"/>
    <property type="project" value="InterPro"/>
</dbReference>
<dbReference type="GO" id="GO:0008270">
    <property type="term" value="F:zinc ion binding"/>
    <property type="evidence" value="ECO:0007669"/>
    <property type="project" value="UniProtKB-UniRule"/>
</dbReference>
<dbReference type="GO" id="GO:0009228">
    <property type="term" value="P:thiamine biosynthetic process"/>
    <property type="evidence" value="ECO:0007669"/>
    <property type="project" value="UniProtKB-KW"/>
</dbReference>
<dbReference type="GO" id="GO:0009229">
    <property type="term" value="P:thiamine diphosphate biosynthetic process"/>
    <property type="evidence" value="ECO:0007669"/>
    <property type="project" value="UniProtKB-UniRule"/>
</dbReference>
<dbReference type="FunFam" id="3.20.20.540:FF:000001">
    <property type="entry name" value="Phosphomethylpyrimidine synthase"/>
    <property type="match status" value="1"/>
</dbReference>
<dbReference type="Gene3D" id="6.10.250.620">
    <property type="match status" value="1"/>
</dbReference>
<dbReference type="Gene3D" id="3.20.20.540">
    <property type="entry name" value="Radical SAM ThiC family, central domain"/>
    <property type="match status" value="1"/>
</dbReference>
<dbReference type="HAMAP" id="MF_00089">
    <property type="entry name" value="ThiC"/>
    <property type="match status" value="1"/>
</dbReference>
<dbReference type="InterPro" id="IPR037509">
    <property type="entry name" value="ThiC"/>
</dbReference>
<dbReference type="InterPro" id="IPR025747">
    <property type="entry name" value="ThiC-associated_dom"/>
</dbReference>
<dbReference type="InterPro" id="IPR038521">
    <property type="entry name" value="ThiC/Bza_core_dom"/>
</dbReference>
<dbReference type="InterPro" id="IPR002817">
    <property type="entry name" value="ThiC/BzaA/B"/>
</dbReference>
<dbReference type="NCBIfam" id="NF006763">
    <property type="entry name" value="PRK09284.1"/>
    <property type="match status" value="1"/>
</dbReference>
<dbReference type="NCBIfam" id="NF009895">
    <property type="entry name" value="PRK13352.1"/>
    <property type="match status" value="1"/>
</dbReference>
<dbReference type="NCBIfam" id="TIGR00190">
    <property type="entry name" value="thiC"/>
    <property type="match status" value="1"/>
</dbReference>
<dbReference type="PANTHER" id="PTHR30557:SF1">
    <property type="entry name" value="PHOSPHOMETHYLPYRIMIDINE SYNTHASE, CHLOROPLASTIC"/>
    <property type="match status" value="1"/>
</dbReference>
<dbReference type="PANTHER" id="PTHR30557">
    <property type="entry name" value="THIAMINE BIOSYNTHESIS PROTEIN THIC"/>
    <property type="match status" value="1"/>
</dbReference>
<dbReference type="Pfam" id="PF13667">
    <property type="entry name" value="ThiC-associated"/>
    <property type="match status" value="1"/>
</dbReference>
<dbReference type="Pfam" id="PF01964">
    <property type="entry name" value="ThiC_Rad_SAM"/>
    <property type="match status" value="1"/>
</dbReference>
<dbReference type="SFLD" id="SFLDF00407">
    <property type="entry name" value="phosphomethylpyrimidine_syntha"/>
    <property type="match status" value="1"/>
</dbReference>
<dbReference type="SFLD" id="SFLDG01114">
    <property type="entry name" value="phosphomethylpyrimidine_syntha"/>
    <property type="match status" value="1"/>
</dbReference>
<dbReference type="SFLD" id="SFLDS00113">
    <property type="entry name" value="Radical_SAM_Phosphomethylpyrim"/>
    <property type="match status" value="1"/>
</dbReference>
<keyword id="KW-0004">4Fe-4S</keyword>
<keyword id="KW-0408">Iron</keyword>
<keyword id="KW-0411">Iron-sulfur</keyword>
<keyword id="KW-0456">Lyase</keyword>
<keyword id="KW-0479">Metal-binding</keyword>
<keyword id="KW-0949">S-adenosyl-L-methionine</keyword>
<keyword id="KW-0784">Thiamine biosynthesis</keyword>
<keyword id="KW-0862">Zinc</keyword>
<organism>
    <name type="scientific">Escherichia coli (strain SMS-3-5 / SECEC)</name>
    <dbReference type="NCBI Taxonomy" id="439855"/>
    <lineage>
        <taxon>Bacteria</taxon>
        <taxon>Pseudomonadati</taxon>
        <taxon>Pseudomonadota</taxon>
        <taxon>Gammaproteobacteria</taxon>
        <taxon>Enterobacterales</taxon>
        <taxon>Enterobacteriaceae</taxon>
        <taxon>Escherichia</taxon>
    </lineage>
</organism>
<accession>B1LNU6</accession>
<reference key="1">
    <citation type="journal article" date="2008" name="J. Bacteriol.">
        <title>Insights into the environmental resistance gene pool from the genome sequence of the multidrug-resistant environmental isolate Escherichia coli SMS-3-5.</title>
        <authorList>
            <person name="Fricke W.F."/>
            <person name="Wright M.S."/>
            <person name="Lindell A.H."/>
            <person name="Harkins D.M."/>
            <person name="Baker-Austin C."/>
            <person name="Ravel J."/>
            <person name="Stepanauskas R."/>
        </authorList>
    </citation>
    <scope>NUCLEOTIDE SEQUENCE [LARGE SCALE GENOMIC DNA]</scope>
    <source>
        <strain>SMS-3-5 / SECEC</strain>
    </source>
</reference>
<feature type="chain" id="PRO_1000198053" description="Phosphomethylpyrimidine synthase">
    <location>
        <begin position="1"/>
        <end position="631"/>
    </location>
</feature>
<feature type="binding site" evidence="1">
    <location>
        <position position="239"/>
    </location>
    <ligand>
        <name>substrate</name>
    </ligand>
</feature>
<feature type="binding site" evidence="1">
    <location>
        <position position="268"/>
    </location>
    <ligand>
        <name>substrate</name>
    </ligand>
</feature>
<feature type="binding site" evidence="1">
    <location>
        <position position="297"/>
    </location>
    <ligand>
        <name>substrate</name>
    </ligand>
</feature>
<feature type="binding site" evidence="1">
    <location>
        <position position="333"/>
    </location>
    <ligand>
        <name>substrate</name>
    </ligand>
</feature>
<feature type="binding site" evidence="1">
    <location>
        <begin position="353"/>
        <end position="355"/>
    </location>
    <ligand>
        <name>substrate</name>
    </ligand>
</feature>
<feature type="binding site" evidence="1">
    <location>
        <begin position="394"/>
        <end position="397"/>
    </location>
    <ligand>
        <name>substrate</name>
    </ligand>
</feature>
<feature type="binding site" evidence="1">
    <location>
        <position position="433"/>
    </location>
    <ligand>
        <name>substrate</name>
    </ligand>
</feature>
<feature type="binding site" evidence="1">
    <location>
        <position position="437"/>
    </location>
    <ligand>
        <name>Zn(2+)</name>
        <dbReference type="ChEBI" id="CHEBI:29105"/>
    </ligand>
</feature>
<feature type="binding site" evidence="1">
    <location>
        <position position="460"/>
    </location>
    <ligand>
        <name>substrate</name>
    </ligand>
</feature>
<feature type="binding site" evidence="1">
    <location>
        <position position="501"/>
    </location>
    <ligand>
        <name>Zn(2+)</name>
        <dbReference type="ChEBI" id="CHEBI:29105"/>
    </ligand>
</feature>
<feature type="binding site" evidence="1">
    <location>
        <position position="581"/>
    </location>
    <ligand>
        <name>[4Fe-4S] cluster</name>
        <dbReference type="ChEBI" id="CHEBI:49883"/>
        <note>4Fe-4S-S-AdoMet</note>
    </ligand>
</feature>
<feature type="binding site" evidence="1">
    <location>
        <position position="584"/>
    </location>
    <ligand>
        <name>[4Fe-4S] cluster</name>
        <dbReference type="ChEBI" id="CHEBI:49883"/>
        <note>4Fe-4S-S-AdoMet</note>
    </ligand>
</feature>
<feature type="binding site" evidence="1">
    <location>
        <position position="589"/>
    </location>
    <ligand>
        <name>[4Fe-4S] cluster</name>
        <dbReference type="ChEBI" id="CHEBI:49883"/>
        <note>4Fe-4S-S-AdoMet</note>
    </ligand>
</feature>
<name>THIC_ECOSM</name>
<protein>
    <recommendedName>
        <fullName evidence="1">Phosphomethylpyrimidine synthase</fullName>
        <ecNumber evidence="1">4.1.99.17</ecNumber>
    </recommendedName>
    <alternativeName>
        <fullName evidence="1">Hydroxymethylpyrimidine phosphate synthase</fullName>
        <shortName evidence="1">HMP-P synthase</shortName>
        <shortName evidence="1">HMP-phosphate synthase</shortName>
        <shortName evidence="1">HMPP synthase</shortName>
    </alternativeName>
    <alternativeName>
        <fullName evidence="1">Thiamine biosynthesis protein ThiC</fullName>
    </alternativeName>
</protein>